<name>TOP4B_AQUAE</name>
<dbReference type="EC" id="5.6.2.2" evidence="1 2"/>
<dbReference type="EMBL" id="AE000657">
    <property type="protein sequence ID" value="AAC07098.1"/>
    <property type="molecule type" value="Genomic_DNA"/>
</dbReference>
<dbReference type="PIR" id="F70388">
    <property type="entry name" value="F70388"/>
</dbReference>
<dbReference type="RefSeq" id="NP_213700.1">
    <property type="nucleotide sequence ID" value="NC_000918.1"/>
</dbReference>
<dbReference type="RefSeq" id="WP_010880638.1">
    <property type="nucleotide sequence ID" value="NC_000918.1"/>
</dbReference>
<dbReference type="SMR" id="O67137"/>
<dbReference type="FunCoup" id="O67137">
    <property type="interactions" value="400"/>
</dbReference>
<dbReference type="STRING" id="224324.aq_1026"/>
<dbReference type="EnsemblBacteria" id="AAC07098">
    <property type="protein sequence ID" value="AAC07098"/>
    <property type="gene ID" value="aq_1026"/>
</dbReference>
<dbReference type="KEGG" id="aae:aq_1026"/>
<dbReference type="PATRIC" id="fig|224324.8.peg.802"/>
<dbReference type="eggNOG" id="COG0187">
    <property type="taxonomic scope" value="Bacteria"/>
</dbReference>
<dbReference type="HOGENOM" id="CLU_006146_0_1_0"/>
<dbReference type="InParanoid" id="O67137"/>
<dbReference type="OrthoDB" id="9802808at2"/>
<dbReference type="Proteomes" id="UP000000798">
    <property type="component" value="Chromosome"/>
</dbReference>
<dbReference type="GO" id="GO:0005694">
    <property type="term" value="C:chromosome"/>
    <property type="evidence" value="ECO:0007669"/>
    <property type="project" value="InterPro"/>
</dbReference>
<dbReference type="GO" id="GO:0005737">
    <property type="term" value="C:cytoplasm"/>
    <property type="evidence" value="ECO:0007669"/>
    <property type="project" value="UniProtKB-SubCell"/>
</dbReference>
<dbReference type="GO" id="GO:0009330">
    <property type="term" value="C:DNA topoisomerase type II (double strand cut, ATP-hydrolyzing) complex"/>
    <property type="evidence" value="ECO:0000314"/>
    <property type="project" value="UniProtKB"/>
</dbReference>
<dbReference type="GO" id="GO:0005524">
    <property type="term" value="F:ATP binding"/>
    <property type="evidence" value="ECO:0007669"/>
    <property type="project" value="UniProtKB-UniRule"/>
</dbReference>
<dbReference type="GO" id="GO:0003677">
    <property type="term" value="F:DNA binding"/>
    <property type="evidence" value="ECO:0007669"/>
    <property type="project" value="UniProtKB-KW"/>
</dbReference>
<dbReference type="GO" id="GO:0003918">
    <property type="term" value="F:DNA topoisomerase type II (double strand cut, ATP-hydrolyzing) activity"/>
    <property type="evidence" value="ECO:0007669"/>
    <property type="project" value="UniProtKB-UniRule"/>
</dbReference>
<dbReference type="GO" id="GO:0046872">
    <property type="term" value="F:metal ion binding"/>
    <property type="evidence" value="ECO:0007669"/>
    <property type="project" value="UniProtKB-KW"/>
</dbReference>
<dbReference type="GO" id="GO:0006265">
    <property type="term" value="P:DNA topological change"/>
    <property type="evidence" value="ECO:0007669"/>
    <property type="project" value="UniProtKB-UniRule"/>
</dbReference>
<dbReference type="GO" id="GO:0006261">
    <property type="term" value="P:DNA-templated DNA replication"/>
    <property type="evidence" value="ECO:0007669"/>
    <property type="project" value="UniProtKB-UniRule"/>
</dbReference>
<dbReference type="CDD" id="cd16928">
    <property type="entry name" value="HATPase_GyrB-like"/>
    <property type="match status" value="1"/>
</dbReference>
<dbReference type="CDD" id="cd00822">
    <property type="entry name" value="TopoII_Trans_DNA_gyrase"/>
    <property type="match status" value="1"/>
</dbReference>
<dbReference type="CDD" id="cd03366">
    <property type="entry name" value="TOPRIM_TopoIIA_GyrB"/>
    <property type="match status" value="1"/>
</dbReference>
<dbReference type="FunFam" id="3.30.230.10:FF:000005">
    <property type="entry name" value="DNA gyrase subunit B"/>
    <property type="match status" value="1"/>
</dbReference>
<dbReference type="FunFam" id="3.30.565.10:FF:000002">
    <property type="entry name" value="DNA gyrase subunit B"/>
    <property type="match status" value="1"/>
</dbReference>
<dbReference type="FunFam" id="3.40.50.670:FF:000001">
    <property type="entry name" value="DNA topoisomerase 2"/>
    <property type="match status" value="1"/>
</dbReference>
<dbReference type="Gene3D" id="3.30.230.10">
    <property type="match status" value="1"/>
</dbReference>
<dbReference type="Gene3D" id="3.40.50.670">
    <property type="match status" value="2"/>
</dbReference>
<dbReference type="Gene3D" id="3.30.565.10">
    <property type="entry name" value="Histidine kinase-like ATPase, C-terminal domain"/>
    <property type="match status" value="1"/>
</dbReference>
<dbReference type="HAMAP" id="MF_01898">
    <property type="entry name" value="GyrB"/>
    <property type="match status" value="1"/>
</dbReference>
<dbReference type="InterPro" id="IPR002288">
    <property type="entry name" value="DNA_gyrase_B_C"/>
</dbReference>
<dbReference type="InterPro" id="IPR011557">
    <property type="entry name" value="GyrB"/>
</dbReference>
<dbReference type="InterPro" id="IPR049353">
    <property type="entry name" value="GyrB_hook"/>
</dbReference>
<dbReference type="InterPro" id="IPR036890">
    <property type="entry name" value="HATPase_C_sf"/>
</dbReference>
<dbReference type="InterPro" id="IPR020568">
    <property type="entry name" value="Ribosomal_Su5_D2-typ_SF"/>
</dbReference>
<dbReference type="InterPro" id="IPR014721">
    <property type="entry name" value="Ribsml_uS5_D2-typ_fold_subgr"/>
</dbReference>
<dbReference type="InterPro" id="IPR001241">
    <property type="entry name" value="Topo_IIA"/>
</dbReference>
<dbReference type="InterPro" id="IPR013760">
    <property type="entry name" value="Topo_IIA-like_dom_sf"/>
</dbReference>
<dbReference type="InterPro" id="IPR000565">
    <property type="entry name" value="Topo_IIA_B"/>
</dbReference>
<dbReference type="InterPro" id="IPR013759">
    <property type="entry name" value="Topo_IIA_B_C"/>
</dbReference>
<dbReference type="InterPro" id="IPR013506">
    <property type="entry name" value="Topo_IIA_bsu_dom2"/>
</dbReference>
<dbReference type="InterPro" id="IPR018522">
    <property type="entry name" value="TopoIIA_CS"/>
</dbReference>
<dbReference type="InterPro" id="IPR006171">
    <property type="entry name" value="TOPRIM_dom"/>
</dbReference>
<dbReference type="InterPro" id="IPR034160">
    <property type="entry name" value="TOPRIM_GyrB"/>
</dbReference>
<dbReference type="NCBIfam" id="TIGR01059">
    <property type="entry name" value="gyrB"/>
    <property type="match status" value="1"/>
</dbReference>
<dbReference type="NCBIfam" id="NF004189">
    <property type="entry name" value="PRK05644.1"/>
    <property type="match status" value="1"/>
</dbReference>
<dbReference type="NCBIfam" id="NF011501">
    <property type="entry name" value="PRK14939.1"/>
    <property type="match status" value="1"/>
</dbReference>
<dbReference type="PANTHER" id="PTHR45866:SF1">
    <property type="entry name" value="DNA GYRASE SUBUNIT B, MITOCHONDRIAL"/>
    <property type="match status" value="1"/>
</dbReference>
<dbReference type="PANTHER" id="PTHR45866">
    <property type="entry name" value="DNA GYRASE/TOPOISOMERASE SUBUNIT B"/>
    <property type="match status" value="1"/>
</dbReference>
<dbReference type="Pfam" id="PF00204">
    <property type="entry name" value="DNA_gyraseB"/>
    <property type="match status" value="1"/>
</dbReference>
<dbReference type="Pfam" id="PF00986">
    <property type="entry name" value="DNA_gyraseB_C"/>
    <property type="match status" value="1"/>
</dbReference>
<dbReference type="Pfam" id="PF21249">
    <property type="entry name" value="GyrB_hook"/>
    <property type="match status" value="1"/>
</dbReference>
<dbReference type="Pfam" id="PF02518">
    <property type="entry name" value="HATPase_c"/>
    <property type="match status" value="1"/>
</dbReference>
<dbReference type="Pfam" id="PF01751">
    <property type="entry name" value="Toprim"/>
    <property type="match status" value="1"/>
</dbReference>
<dbReference type="PRINTS" id="PR01159">
    <property type="entry name" value="DNAGYRASEB"/>
</dbReference>
<dbReference type="PRINTS" id="PR00418">
    <property type="entry name" value="TPI2FAMILY"/>
</dbReference>
<dbReference type="SMART" id="SM00387">
    <property type="entry name" value="HATPase_c"/>
    <property type="match status" value="1"/>
</dbReference>
<dbReference type="SMART" id="SM00433">
    <property type="entry name" value="TOP2c"/>
    <property type="match status" value="1"/>
</dbReference>
<dbReference type="SUPFAM" id="SSF55874">
    <property type="entry name" value="ATPase domain of HSP90 chaperone/DNA topoisomerase II/histidine kinase"/>
    <property type="match status" value="1"/>
</dbReference>
<dbReference type="SUPFAM" id="SSF54211">
    <property type="entry name" value="Ribosomal protein S5 domain 2-like"/>
    <property type="match status" value="1"/>
</dbReference>
<dbReference type="SUPFAM" id="SSF56719">
    <property type="entry name" value="Type II DNA topoisomerase"/>
    <property type="match status" value="1"/>
</dbReference>
<dbReference type="PROSITE" id="PS00177">
    <property type="entry name" value="TOPOISOMERASE_II"/>
    <property type="match status" value="1"/>
</dbReference>
<dbReference type="PROSITE" id="PS50880">
    <property type="entry name" value="TOPRIM"/>
    <property type="match status" value="1"/>
</dbReference>
<reference key="1">
    <citation type="journal article" date="1998" name="Nature">
        <title>The complete genome of the hyperthermophilic bacterium Aquifex aeolicus.</title>
        <authorList>
            <person name="Deckert G."/>
            <person name="Warren P.V."/>
            <person name="Gaasterland T."/>
            <person name="Young W.G."/>
            <person name="Lenox A.L."/>
            <person name="Graham D.E."/>
            <person name="Overbeek R."/>
            <person name="Snead M.A."/>
            <person name="Keller M."/>
            <person name="Aujay M."/>
            <person name="Huber R."/>
            <person name="Feldman R.A."/>
            <person name="Short J.M."/>
            <person name="Olsen G.J."/>
            <person name="Swanson R.V."/>
        </authorList>
    </citation>
    <scope>NUCLEOTIDE SEQUENCE [LARGE SCALE GENOMIC DNA]</scope>
    <source>
        <strain>VF5</strain>
    </source>
</reference>
<reference key="2">
    <citation type="journal article" date="2010" name="Proc. Natl. Acad. Sci. U.S.A.">
        <title>A naturally chimeric type IIA topoisomerase in Aquifex aeolicus highlights an evolutionary path for the emergence of functional paralogs.</title>
        <authorList>
            <person name="Tretter E.M."/>
            <person name="Lerman J.C."/>
            <person name="Berger J.M."/>
        </authorList>
    </citation>
    <scope>FUNCTION</scope>
    <scope>CATALYTIC ACTIVITY</scope>
    <scope>BIOPHYSICOCHEMICAL PROPERTIES</scope>
    <scope>SUBUNIT</scope>
</reference>
<organism>
    <name type="scientific">Aquifex aeolicus (strain VF5)</name>
    <dbReference type="NCBI Taxonomy" id="224324"/>
    <lineage>
        <taxon>Bacteria</taxon>
        <taxon>Pseudomonadati</taxon>
        <taxon>Aquificota</taxon>
        <taxon>Aquificia</taxon>
        <taxon>Aquificales</taxon>
        <taxon>Aquificaceae</taxon>
        <taxon>Aquifex</taxon>
    </lineage>
</organism>
<evidence type="ECO:0000255" key="1">
    <source>
        <dbReference type="HAMAP-Rule" id="MF_01898"/>
    </source>
</evidence>
<evidence type="ECO:0000269" key="2">
    <source>
    </source>
</evidence>
<evidence type="ECO:0000303" key="3">
    <source>
    </source>
</evidence>
<evidence type="ECO:0000305" key="4">
    <source>
    </source>
</evidence>
<accession>O67137</accession>
<feature type="chain" id="PRO_0000145289" description="Type 2 topoisomerase subunit B">
    <location>
        <begin position="1"/>
        <end position="792"/>
    </location>
</feature>
<feature type="domain" description="Toprim" evidence="1">
    <location>
        <begin position="423"/>
        <end position="537"/>
    </location>
</feature>
<feature type="binding site" evidence="1">
    <location>
        <position position="429"/>
    </location>
    <ligand>
        <name>Mg(2+)</name>
        <dbReference type="ChEBI" id="CHEBI:18420"/>
        <label>1</label>
        <note>catalytic</note>
    </ligand>
</feature>
<feature type="binding site" evidence="1">
    <location>
        <position position="502"/>
    </location>
    <ligand>
        <name>Mg(2+)</name>
        <dbReference type="ChEBI" id="CHEBI:18420"/>
        <label>1</label>
        <note>catalytic</note>
    </ligand>
</feature>
<feature type="binding site" evidence="1">
    <location>
        <position position="502"/>
    </location>
    <ligand>
        <name>Mg(2+)</name>
        <dbReference type="ChEBI" id="CHEBI:18420"/>
        <label>2</label>
    </ligand>
</feature>
<feature type="binding site" evidence="1">
    <location>
        <position position="504"/>
    </location>
    <ligand>
        <name>Mg(2+)</name>
        <dbReference type="ChEBI" id="CHEBI:18420"/>
        <label>2</label>
    </ligand>
</feature>
<feature type="site" description="Interaction with DNA" evidence="1">
    <location>
        <position position="454"/>
    </location>
</feature>
<feature type="site" description="Interaction with DNA" evidence="1">
    <location>
        <position position="457"/>
    </location>
</feature>
<comment type="function">
    <text evidence="2">A type II topoisomerase. Despite its similarity to DNA gyrase, this enzyme is not able to supercoil DNA, and instead acts like topoisomerase IV. Relaxes both positively and negatively supercoiled DNA in an ATP-dependent fashion, decatenates interlocked circles. If this subunit is reconstituted with GyrA from E.coli the hybrid enzyme supercoils relaxed plasmid DNA; if paired with E.coli ParC supercoiling is not restored. This the first bacteria shown to not contain DNA gyrase, although it has 2 copies of a reverse gyrase that introduces positive supercoils. Type II topoisomerases break and join 2 DNA strands simultaneously in an ATP-dependent manner (PubMed:21076033).</text>
</comment>
<comment type="catalytic activity">
    <reaction evidence="1 2">
        <text>ATP-dependent breakage, passage and rejoining of double-stranded DNA.</text>
        <dbReference type="EC" id="5.6.2.2"/>
    </reaction>
</comment>
<comment type="cofactor">
    <cofactor evidence="1">
        <name>Mg(2+)</name>
        <dbReference type="ChEBI" id="CHEBI:18420"/>
    </cofactor>
    <cofactor evidence="1">
        <name>Mn(2+)</name>
        <dbReference type="ChEBI" id="CHEBI:29035"/>
    </cofactor>
    <cofactor evidence="1">
        <name>Ca(2+)</name>
        <dbReference type="ChEBI" id="CHEBI:29108"/>
    </cofactor>
    <text evidence="1">Binds two Mg(2+) per subunit. The magnesium ions form salt bridges with both the protein and the DNA. Can also accept other divalent metal cations, such as Mn(2+) or Ca(2+).</text>
</comment>
<comment type="biophysicochemical properties">
    <temperatureDependence>
        <text evidence="2">Optimum temperature is 70 degrees Celsius, active between 37 and 90 degrees Celsius.</text>
    </temperatureDependence>
</comment>
<comment type="subunit">
    <text evidence="1 4">Heterotetramer, composed of two GyrA and two GyrB chains. In the heterotetramer, 'GyrA' contains the active site tyrosine that forms a transient covalent intermediate with DNA, while 'GyrB' binds cofactors and catalyzes ATP hydrolysis (PubMed:21076033).</text>
</comment>
<comment type="subcellular location">
    <subcellularLocation>
        <location evidence="1">Cytoplasm</location>
    </subcellularLocation>
</comment>
<comment type="similarity">
    <text evidence="1">Belongs to the type II topoisomerase GyrB family.</text>
</comment>
<protein>
    <recommendedName>
        <fullName evidence="3">Type 2 topoisomerase subunit B</fullName>
        <ecNumber evidence="1 2">5.6.2.2</ecNumber>
    </recommendedName>
    <alternativeName>
        <fullName>DNA gyrase subunit B</fullName>
    </alternativeName>
</protein>
<proteinExistence type="evidence at protein level"/>
<gene>
    <name evidence="1" type="primary">gyrB</name>
    <name type="ordered locus">aq_1026</name>
</gene>
<sequence length="792" mass="90530">MKKRQSQTPQEYTAEAIKAVSGLEHVRLRPAMYIGDIGERGLHHLIWEILDNAVDEAVAGYARNISVTIHRDNSVTVEDDGRGIPVDIHPETGKPAVEMVFTMLGAGGKFEKKVYTYSGGLHGVGASVVNALSEWLIVEVYRDGKIYRMAFKRGEVVEPLHVVGETKKRGTKVSFKPDPEIFETTEIKFDIVEKRVRELAYLNPEVKFELTDERLGKHLIYKFDRGIEELVKYLNEGKEPLFKDIIRIQGEKEGVIVDIAFQYVKDYKERIESFVNNIKTVEGGTHVTGFRSGLSKAVIRMAQGLKLAKELKKSFTGEDVREGLTAVVACKVPNPQFEGQTKTKLGNQNVKQIVESITYDFLTSYFEKKRDVLKAIVEKAIEAALAREAAKKAKELVRRKSPLEEGVLPGKLADCSETDPSKCEIFLVEGDSAGGSAKQARDRRYQAILPLRGKIINVEKARIDKVLSNDEIKAIVSALGCGIGEDLDLKKLRYHKIILMTDADVDGSHIRTLLLTFFYRFMPKLVEEGYVYIAEPPLYRVKKGKKEIYIKDDKEFEHFLLNEIREKGRLVDAREKEFKGEELVRLLIDLKDYEDAYRALVKSKGENLVNFLLTHRVREEDLRNPARVKEITHLMEEELGDYRVDTKYNELEGAYDIIFYDDKLGTKTIIDVNFLSSLSYREVLEGIHLHLPVQVFFENKKVEINSLGEIYDKFMDFARSGMEVQRYKGLGEMNPEQLWETTMNPKTRRLKKVKIEDAAEADRIFTILMGEQVEPRREFIEAYAKEVKHLDV</sequence>
<keyword id="KW-0067">ATP-binding</keyword>
<keyword id="KW-0963">Cytoplasm</keyword>
<keyword id="KW-0238">DNA-binding</keyword>
<keyword id="KW-0413">Isomerase</keyword>
<keyword id="KW-0460">Magnesium</keyword>
<keyword id="KW-0479">Metal-binding</keyword>
<keyword id="KW-0547">Nucleotide-binding</keyword>
<keyword id="KW-1185">Reference proteome</keyword>
<keyword id="KW-0799">Topoisomerase</keyword>